<protein>
    <recommendedName>
        <fullName evidence="1">Protein-L-isoaspartate O-methyltransferase</fullName>
        <ecNumber evidence="1">2.1.1.77</ecNumber>
    </recommendedName>
    <alternativeName>
        <fullName evidence="1">L-isoaspartyl protein carboxyl methyltransferase</fullName>
    </alternativeName>
    <alternativeName>
        <fullName evidence="1">Protein L-isoaspartyl methyltransferase</fullName>
    </alternativeName>
    <alternativeName>
        <fullName evidence="1">Protein-beta-aspartate methyltransferase</fullName>
        <shortName evidence="1">PIMT</shortName>
    </alternativeName>
</protein>
<dbReference type="EC" id="2.1.1.77" evidence="1"/>
<dbReference type="EMBL" id="CP000142">
    <property type="protein sequence ID" value="ABA88673.1"/>
    <property type="molecule type" value="Genomic_DNA"/>
</dbReference>
<dbReference type="RefSeq" id="WP_011341156.1">
    <property type="nucleotide sequence ID" value="NC_007498.2"/>
</dbReference>
<dbReference type="SMR" id="Q3A4N4"/>
<dbReference type="STRING" id="338963.Pcar_1427"/>
<dbReference type="KEGG" id="pca:Pcar_1427"/>
<dbReference type="eggNOG" id="COG2518">
    <property type="taxonomic scope" value="Bacteria"/>
</dbReference>
<dbReference type="HOGENOM" id="CLU_055432_2_0_7"/>
<dbReference type="OrthoDB" id="9810066at2"/>
<dbReference type="Proteomes" id="UP000002534">
    <property type="component" value="Chromosome"/>
</dbReference>
<dbReference type="GO" id="GO:0005737">
    <property type="term" value="C:cytoplasm"/>
    <property type="evidence" value="ECO:0007669"/>
    <property type="project" value="UniProtKB-SubCell"/>
</dbReference>
<dbReference type="GO" id="GO:0004719">
    <property type="term" value="F:protein-L-isoaspartate (D-aspartate) O-methyltransferase activity"/>
    <property type="evidence" value="ECO:0007669"/>
    <property type="project" value="UniProtKB-UniRule"/>
</dbReference>
<dbReference type="GO" id="GO:0032259">
    <property type="term" value="P:methylation"/>
    <property type="evidence" value="ECO:0007669"/>
    <property type="project" value="UniProtKB-KW"/>
</dbReference>
<dbReference type="GO" id="GO:0036211">
    <property type="term" value="P:protein modification process"/>
    <property type="evidence" value="ECO:0007669"/>
    <property type="project" value="UniProtKB-UniRule"/>
</dbReference>
<dbReference type="GO" id="GO:0030091">
    <property type="term" value="P:protein repair"/>
    <property type="evidence" value="ECO:0007669"/>
    <property type="project" value="UniProtKB-UniRule"/>
</dbReference>
<dbReference type="CDD" id="cd02440">
    <property type="entry name" value="AdoMet_MTases"/>
    <property type="match status" value="1"/>
</dbReference>
<dbReference type="FunFam" id="3.40.50.150:FF:000010">
    <property type="entry name" value="Protein-L-isoaspartate O-methyltransferase"/>
    <property type="match status" value="1"/>
</dbReference>
<dbReference type="Gene3D" id="3.40.50.150">
    <property type="entry name" value="Vaccinia Virus protein VP39"/>
    <property type="match status" value="1"/>
</dbReference>
<dbReference type="HAMAP" id="MF_00090">
    <property type="entry name" value="PIMT"/>
    <property type="match status" value="1"/>
</dbReference>
<dbReference type="InterPro" id="IPR000682">
    <property type="entry name" value="PCMT"/>
</dbReference>
<dbReference type="InterPro" id="IPR029063">
    <property type="entry name" value="SAM-dependent_MTases_sf"/>
</dbReference>
<dbReference type="NCBIfam" id="TIGR00080">
    <property type="entry name" value="pimt"/>
    <property type="match status" value="1"/>
</dbReference>
<dbReference type="NCBIfam" id="NF001453">
    <property type="entry name" value="PRK00312.1"/>
    <property type="match status" value="1"/>
</dbReference>
<dbReference type="PANTHER" id="PTHR11579">
    <property type="entry name" value="PROTEIN-L-ISOASPARTATE O-METHYLTRANSFERASE"/>
    <property type="match status" value="1"/>
</dbReference>
<dbReference type="PANTHER" id="PTHR11579:SF0">
    <property type="entry name" value="PROTEIN-L-ISOASPARTATE(D-ASPARTATE) O-METHYLTRANSFERASE"/>
    <property type="match status" value="1"/>
</dbReference>
<dbReference type="Pfam" id="PF01135">
    <property type="entry name" value="PCMT"/>
    <property type="match status" value="1"/>
</dbReference>
<dbReference type="SUPFAM" id="SSF53335">
    <property type="entry name" value="S-adenosyl-L-methionine-dependent methyltransferases"/>
    <property type="match status" value="1"/>
</dbReference>
<gene>
    <name evidence="1" type="primary">pcm</name>
    <name type="ordered locus">Pcar_1427</name>
</gene>
<proteinExistence type="inferred from homology"/>
<sequence length="217" mass="24227">MDYSIARRLMVEQQVIRRGVSDPLVVDAMMRVPRHLFVEEALWSQAYSDFPLPIGEKQTISQPFMVAFMTESLCLHGGEKVLEIGTGSGYQAAVLSQIVSRVYTVERLPGLARRARRILDSVGCRNVNIKLTDGTFGWEEESPFDGIVVTAGSPQIPHHYLEQLAVGGRLVIPVGNRGSQVLKRVVRTGVEKFSEEDLLDCRFVPLVGKYGWHEEGD</sequence>
<evidence type="ECO:0000255" key="1">
    <source>
        <dbReference type="HAMAP-Rule" id="MF_00090"/>
    </source>
</evidence>
<keyword id="KW-0963">Cytoplasm</keyword>
<keyword id="KW-0489">Methyltransferase</keyword>
<keyword id="KW-1185">Reference proteome</keyword>
<keyword id="KW-0949">S-adenosyl-L-methionine</keyword>
<keyword id="KW-0808">Transferase</keyword>
<comment type="function">
    <text evidence="1">Catalyzes the methyl esterification of L-isoaspartyl residues in peptides and proteins that result from spontaneous decomposition of normal L-aspartyl and L-asparaginyl residues. It plays a role in the repair and/or degradation of damaged proteins.</text>
</comment>
<comment type="catalytic activity">
    <reaction evidence="1">
        <text>[protein]-L-isoaspartate + S-adenosyl-L-methionine = [protein]-L-isoaspartate alpha-methyl ester + S-adenosyl-L-homocysteine</text>
        <dbReference type="Rhea" id="RHEA:12705"/>
        <dbReference type="Rhea" id="RHEA-COMP:12143"/>
        <dbReference type="Rhea" id="RHEA-COMP:12144"/>
        <dbReference type="ChEBI" id="CHEBI:57856"/>
        <dbReference type="ChEBI" id="CHEBI:59789"/>
        <dbReference type="ChEBI" id="CHEBI:90596"/>
        <dbReference type="ChEBI" id="CHEBI:90598"/>
        <dbReference type="EC" id="2.1.1.77"/>
    </reaction>
</comment>
<comment type="subcellular location">
    <subcellularLocation>
        <location evidence="1">Cytoplasm</location>
    </subcellularLocation>
</comment>
<comment type="similarity">
    <text evidence="1">Belongs to the methyltransferase superfamily. L-isoaspartyl/D-aspartyl protein methyltransferase family.</text>
</comment>
<name>PIMT_SYNC1</name>
<accession>Q3A4N4</accession>
<organism>
    <name type="scientific">Syntrophotalea carbinolica (strain DSM 2380 / NBRC 103641 / GraBd1)</name>
    <name type="common">Pelobacter carbinolicus</name>
    <dbReference type="NCBI Taxonomy" id="338963"/>
    <lineage>
        <taxon>Bacteria</taxon>
        <taxon>Pseudomonadati</taxon>
        <taxon>Thermodesulfobacteriota</taxon>
        <taxon>Desulfuromonadia</taxon>
        <taxon>Desulfuromonadales</taxon>
        <taxon>Syntrophotaleaceae</taxon>
        <taxon>Syntrophotalea</taxon>
    </lineage>
</organism>
<feature type="chain" id="PRO_0000351895" description="Protein-L-isoaspartate O-methyltransferase">
    <location>
        <begin position="1"/>
        <end position="217"/>
    </location>
</feature>
<feature type="active site" evidence="1">
    <location>
        <position position="61"/>
    </location>
</feature>
<reference key="1">
    <citation type="submission" date="2005-10" db="EMBL/GenBank/DDBJ databases">
        <title>Complete sequence of Pelobacter carbinolicus DSM 2380.</title>
        <authorList>
            <person name="Copeland A."/>
            <person name="Lucas S."/>
            <person name="Lapidus A."/>
            <person name="Barry K."/>
            <person name="Detter J.C."/>
            <person name="Glavina T."/>
            <person name="Hammon N."/>
            <person name="Israni S."/>
            <person name="Pitluck S."/>
            <person name="Chertkov O."/>
            <person name="Schmutz J."/>
            <person name="Larimer F."/>
            <person name="Land M."/>
            <person name="Kyrpides N."/>
            <person name="Ivanova N."/>
            <person name="Richardson P."/>
        </authorList>
    </citation>
    <scope>NUCLEOTIDE SEQUENCE [LARGE SCALE GENOMIC DNA]</scope>
    <source>
        <strain>DSM 2380 / NBRC 103641 / GraBd1</strain>
    </source>
</reference>